<comment type="function">
    <text>Molecular chaperone; assists the folding of proteins upon ATP hydrolysis. Known to play a role, in vitro, in the folding of actin and tubulin. In yeast may play a role in mitotic spindle formation.</text>
</comment>
<comment type="subunit">
    <text>Heterooligomeric complex of about 850 to 900 kDa that forms two stacked rings, 12 to 16 nm in diameter.</text>
</comment>
<comment type="subcellular location">
    <subcellularLocation>
        <location>Cytoplasm</location>
    </subcellularLocation>
</comment>
<comment type="similarity">
    <text evidence="1">Belongs to the TCP-1 chaperonin family.</text>
</comment>
<dbReference type="EMBL" id="L27698">
    <property type="protein sequence ID" value="AAA35140.1"/>
    <property type="molecule type" value="Genomic_DNA"/>
</dbReference>
<dbReference type="EMBL" id="Z46727">
    <property type="protein sequence ID" value="CAA86694.1"/>
    <property type="molecule type" value="Genomic_DNA"/>
</dbReference>
<dbReference type="EMBL" id="BK006938">
    <property type="protein sequence ID" value="DAA12031.1"/>
    <property type="molecule type" value="Genomic_DNA"/>
</dbReference>
<dbReference type="PIR" id="S48086">
    <property type="entry name" value="S48086"/>
</dbReference>
<dbReference type="RefSeq" id="NP_010474.3">
    <property type="nucleotide sequence ID" value="NM_001180496.3"/>
</dbReference>
<dbReference type="PDB" id="4V81">
    <property type="method" value="X-ray"/>
    <property type="resolution" value="3.80 A"/>
    <property type="chains" value="F/N/f/n=1-546"/>
</dbReference>
<dbReference type="PDB" id="4V8R">
    <property type="method" value="X-ray"/>
    <property type="resolution" value="3.80 A"/>
    <property type="chains" value="AZ/Az/BZ/Bz=1-546"/>
</dbReference>
<dbReference type="PDB" id="4V94">
    <property type="method" value="X-ray"/>
    <property type="resolution" value="3.80 A"/>
    <property type="chains" value="F/N/f/n=1-546"/>
</dbReference>
<dbReference type="PDB" id="5GW4">
    <property type="method" value="EM"/>
    <property type="resolution" value="4.70 A"/>
    <property type="chains" value="Z/z=1-546"/>
</dbReference>
<dbReference type="PDB" id="5GW5">
    <property type="method" value="EM"/>
    <property type="resolution" value="4.60 A"/>
    <property type="chains" value="Z/z=1-546"/>
</dbReference>
<dbReference type="PDB" id="6KRD">
    <property type="method" value="EM"/>
    <property type="resolution" value="4.38 A"/>
    <property type="chains" value="Z/z=1-546"/>
</dbReference>
<dbReference type="PDB" id="6KRE">
    <property type="method" value="EM"/>
    <property type="resolution" value="4.45 A"/>
    <property type="chains" value="Z/z=1-546"/>
</dbReference>
<dbReference type="PDB" id="6KS6">
    <property type="method" value="EM"/>
    <property type="resolution" value="2.99 A"/>
    <property type="chains" value="Z/z=1-546"/>
</dbReference>
<dbReference type="PDB" id="6KS7">
    <property type="method" value="EM"/>
    <property type="resolution" value="4.62 A"/>
    <property type="chains" value="Z/z=1-546"/>
</dbReference>
<dbReference type="PDB" id="6KS8">
    <property type="method" value="EM"/>
    <property type="resolution" value="4.69 A"/>
    <property type="chains" value="Z/z=1-546"/>
</dbReference>
<dbReference type="PDB" id="7YLU">
    <property type="method" value="EM"/>
    <property type="resolution" value="4.55 A"/>
    <property type="chains" value="Z/z=1-546"/>
</dbReference>
<dbReference type="PDB" id="7YLV">
    <property type="method" value="EM"/>
    <property type="resolution" value="3.91 A"/>
    <property type="chains" value="Z/z=1-546"/>
</dbReference>
<dbReference type="PDB" id="7YLW">
    <property type="method" value="EM"/>
    <property type="resolution" value="3.39 A"/>
    <property type="chains" value="Z/z=1-546"/>
</dbReference>
<dbReference type="PDB" id="7YLX">
    <property type="method" value="EM"/>
    <property type="resolution" value="3.20 A"/>
    <property type="chains" value="Z/z=1-546"/>
</dbReference>
<dbReference type="PDB" id="7YLY">
    <property type="method" value="EM"/>
    <property type="resolution" value="3.05 A"/>
    <property type="chains" value="Z/z=1-546"/>
</dbReference>
<dbReference type="PDB" id="9CR2">
    <property type="method" value="EM"/>
    <property type="resolution" value="4.80 A"/>
    <property type="chains" value="Z/z=1-546"/>
</dbReference>
<dbReference type="PDB" id="9CS3">
    <property type="method" value="EM"/>
    <property type="resolution" value="5.60 A"/>
    <property type="chains" value="Z/z=1-546"/>
</dbReference>
<dbReference type="PDB" id="9CS4">
    <property type="method" value="EM"/>
    <property type="resolution" value="6.80 A"/>
    <property type="chains" value="Z/z=1-546"/>
</dbReference>
<dbReference type="PDB" id="9CS6">
    <property type="method" value="EM"/>
    <property type="resolution" value="4.10 A"/>
    <property type="chains" value="Z/z=1-546"/>
</dbReference>
<dbReference type="PDB" id="9CSA">
    <property type="method" value="EM"/>
    <property type="resolution" value="3.60 A"/>
    <property type="chains" value="Z/z=1-546"/>
</dbReference>
<dbReference type="PDBsum" id="4V81"/>
<dbReference type="PDBsum" id="4V8R"/>
<dbReference type="PDBsum" id="4V94"/>
<dbReference type="PDBsum" id="5GW4"/>
<dbReference type="PDBsum" id="5GW5"/>
<dbReference type="PDBsum" id="6KRD"/>
<dbReference type="PDBsum" id="6KRE"/>
<dbReference type="PDBsum" id="6KS6"/>
<dbReference type="PDBsum" id="6KS7"/>
<dbReference type="PDBsum" id="6KS8"/>
<dbReference type="PDBsum" id="7YLU"/>
<dbReference type="PDBsum" id="7YLV"/>
<dbReference type="PDBsum" id="7YLW"/>
<dbReference type="PDBsum" id="7YLX"/>
<dbReference type="PDBsum" id="7YLY"/>
<dbReference type="PDBsum" id="9CR2"/>
<dbReference type="PDBsum" id="9CS3"/>
<dbReference type="PDBsum" id="9CS4"/>
<dbReference type="PDBsum" id="9CS6"/>
<dbReference type="PDBsum" id="9CSA"/>
<dbReference type="EMDB" id="EMD-0756"/>
<dbReference type="EMDB" id="EMD-0757"/>
<dbReference type="EMDB" id="EMD-0758"/>
<dbReference type="EMDB" id="EMD-0759"/>
<dbReference type="EMDB" id="EMD-0760"/>
<dbReference type="EMDB" id="EMD-33917"/>
<dbReference type="EMDB" id="EMD-33918"/>
<dbReference type="EMDB" id="EMD-33919"/>
<dbReference type="EMDB" id="EMD-33920"/>
<dbReference type="EMDB" id="EMD-33921"/>
<dbReference type="EMDB" id="EMD-45830"/>
<dbReference type="EMDB" id="EMD-45886"/>
<dbReference type="EMDB" id="EMD-45887"/>
<dbReference type="EMDB" id="EMD-45888"/>
<dbReference type="EMDB" id="EMD-45889"/>
<dbReference type="EMDB" id="EMD-9540"/>
<dbReference type="EMDB" id="EMD-9541"/>
<dbReference type="SMR" id="P39079"/>
<dbReference type="BioGRID" id="32241">
    <property type="interactions" value="734"/>
</dbReference>
<dbReference type="ComplexPortal" id="CPX-2156">
    <property type="entry name" value="Chaperonin-containing T-complex"/>
</dbReference>
<dbReference type="DIP" id="DIP-6401N"/>
<dbReference type="FunCoup" id="P39079">
    <property type="interactions" value="1352"/>
</dbReference>
<dbReference type="IntAct" id="P39079">
    <property type="interactions" value="59"/>
</dbReference>
<dbReference type="MINT" id="P39079"/>
<dbReference type="STRING" id="4932.YDR188W"/>
<dbReference type="iPTMnet" id="P39079"/>
<dbReference type="PaxDb" id="4932-YDR188W"/>
<dbReference type="PeptideAtlas" id="P39079"/>
<dbReference type="DNASU" id="851768"/>
<dbReference type="EnsemblFungi" id="YDR188W_mRNA">
    <property type="protein sequence ID" value="YDR188W"/>
    <property type="gene ID" value="YDR188W"/>
</dbReference>
<dbReference type="GeneID" id="851768"/>
<dbReference type="KEGG" id="sce:YDR188W"/>
<dbReference type="AGR" id="SGD:S000002596"/>
<dbReference type="SGD" id="S000002596">
    <property type="gene designation" value="CCT6"/>
</dbReference>
<dbReference type="VEuPathDB" id="FungiDB:YDR188W"/>
<dbReference type="eggNOG" id="KOG0359">
    <property type="taxonomic scope" value="Eukaryota"/>
</dbReference>
<dbReference type="HOGENOM" id="CLU_008891_3_1_1"/>
<dbReference type="InParanoid" id="P39079"/>
<dbReference type="OMA" id="LHPRIMT"/>
<dbReference type="OrthoDB" id="10052040at2759"/>
<dbReference type="BioCyc" id="YEAST:G3O-29776-MONOMER"/>
<dbReference type="BRENDA" id="3.6.4.B10">
    <property type="organism ID" value="984"/>
</dbReference>
<dbReference type="Reactome" id="R-SCE-390471">
    <property type="pathway name" value="Association of TriC/CCT with target proteins during biosynthesis"/>
</dbReference>
<dbReference type="Reactome" id="R-SCE-6814122">
    <property type="pathway name" value="Cooperation of PDCL (PhLP1) and TRiC/CCT in G-protein beta folding"/>
</dbReference>
<dbReference type="BioGRID-ORCS" id="851768">
    <property type="hits" value="8 hits in 10 CRISPR screens"/>
</dbReference>
<dbReference type="PRO" id="PR:P39079"/>
<dbReference type="Proteomes" id="UP000002311">
    <property type="component" value="Chromosome IV"/>
</dbReference>
<dbReference type="RNAct" id="P39079">
    <property type="molecule type" value="protein"/>
</dbReference>
<dbReference type="GO" id="GO:0005832">
    <property type="term" value="C:chaperonin-containing T-complex"/>
    <property type="evidence" value="ECO:0000314"/>
    <property type="project" value="SGD"/>
</dbReference>
<dbReference type="GO" id="GO:0005524">
    <property type="term" value="F:ATP binding"/>
    <property type="evidence" value="ECO:0007669"/>
    <property type="project" value="UniProtKB-KW"/>
</dbReference>
<dbReference type="GO" id="GO:0016887">
    <property type="term" value="F:ATP hydrolysis activity"/>
    <property type="evidence" value="ECO:0007669"/>
    <property type="project" value="InterPro"/>
</dbReference>
<dbReference type="GO" id="GO:0140662">
    <property type="term" value="F:ATP-dependent protein folding chaperone"/>
    <property type="evidence" value="ECO:0007669"/>
    <property type="project" value="InterPro"/>
</dbReference>
<dbReference type="GO" id="GO:0051082">
    <property type="term" value="F:unfolded protein binding"/>
    <property type="evidence" value="ECO:0000314"/>
    <property type="project" value="SGD"/>
</dbReference>
<dbReference type="GO" id="GO:0051086">
    <property type="term" value="P:chaperone mediated protein folding independent of cofactor"/>
    <property type="evidence" value="ECO:0000314"/>
    <property type="project" value="ComplexPortal"/>
</dbReference>
<dbReference type="GO" id="GO:0006457">
    <property type="term" value="P:protein folding"/>
    <property type="evidence" value="ECO:0000314"/>
    <property type="project" value="SGD"/>
</dbReference>
<dbReference type="CDD" id="cd03342">
    <property type="entry name" value="TCP1_zeta"/>
    <property type="match status" value="1"/>
</dbReference>
<dbReference type="FunFam" id="1.10.560.10:FF:000058">
    <property type="entry name" value="T-complex protein 1 subunit zeta"/>
    <property type="match status" value="1"/>
</dbReference>
<dbReference type="FunFam" id="3.50.7.10:FF:000004">
    <property type="entry name" value="T-complex protein 1 subunit zeta"/>
    <property type="match status" value="1"/>
</dbReference>
<dbReference type="Gene3D" id="3.50.7.10">
    <property type="entry name" value="GroEL"/>
    <property type="match status" value="1"/>
</dbReference>
<dbReference type="Gene3D" id="1.10.560.10">
    <property type="entry name" value="GroEL-like equatorial domain"/>
    <property type="match status" value="1"/>
</dbReference>
<dbReference type="Gene3D" id="3.30.260.10">
    <property type="entry name" value="TCP-1-like chaperonin intermediate domain"/>
    <property type="match status" value="1"/>
</dbReference>
<dbReference type="InterPro" id="IPR012722">
    <property type="entry name" value="Chap_CCT_zeta"/>
</dbReference>
<dbReference type="InterPro" id="IPR017998">
    <property type="entry name" value="Chaperone_TCP-1"/>
</dbReference>
<dbReference type="InterPro" id="IPR002194">
    <property type="entry name" value="Chaperonin_TCP-1_CS"/>
</dbReference>
<dbReference type="InterPro" id="IPR002423">
    <property type="entry name" value="Cpn60/GroEL/TCP-1"/>
</dbReference>
<dbReference type="InterPro" id="IPR027409">
    <property type="entry name" value="GroEL-like_apical_dom_sf"/>
</dbReference>
<dbReference type="InterPro" id="IPR027413">
    <property type="entry name" value="GROEL-like_equatorial_sf"/>
</dbReference>
<dbReference type="InterPro" id="IPR027410">
    <property type="entry name" value="TCP-1-like_intermed_sf"/>
</dbReference>
<dbReference type="NCBIfam" id="TIGR02347">
    <property type="entry name" value="chap_CCT_zeta"/>
    <property type="match status" value="1"/>
</dbReference>
<dbReference type="PANTHER" id="PTHR11353">
    <property type="entry name" value="CHAPERONIN"/>
    <property type="match status" value="1"/>
</dbReference>
<dbReference type="Pfam" id="PF00118">
    <property type="entry name" value="Cpn60_TCP1"/>
    <property type="match status" value="1"/>
</dbReference>
<dbReference type="PRINTS" id="PR00304">
    <property type="entry name" value="TCOMPLEXTCP1"/>
</dbReference>
<dbReference type="SUPFAM" id="SSF52029">
    <property type="entry name" value="GroEL apical domain-like"/>
    <property type="match status" value="1"/>
</dbReference>
<dbReference type="SUPFAM" id="SSF48592">
    <property type="entry name" value="GroEL equatorial domain-like"/>
    <property type="match status" value="1"/>
</dbReference>
<dbReference type="SUPFAM" id="SSF54849">
    <property type="entry name" value="GroEL-intermediate domain like"/>
    <property type="match status" value="1"/>
</dbReference>
<dbReference type="PROSITE" id="PS00750">
    <property type="entry name" value="TCP1_1"/>
    <property type="match status" value="1"/>
</dbReference>
<dbReference type="PROSITE" id="PS00751">
    <property type="entry name" value="TCP1_2"/>
    <property type="match status" value="1"/>
</dbReference>
<dbReference type="PROSITE" id="PS00995">
    <property type="entry name" value="TCP1_3"/>
    <property type="match status" value="1"/>
</dbReference>
<reference key="1">
    <citation type="journal article" date="1994" name="J. Biol. Chem.">
        <title>Tcp20, a subunit of the eukaryotic TRiC chaperonin from humans and yeast.</title>
        <authorList>
            <person name="Li W.-Z."/>
            <person name="Lin P."/>
            <person name="Frydman J."/>
            <person name="Boal T.R."/>
            <person name="Cardillo T.S."/>
            <person name="Richard L.M."/>
            <person name="Toth D."/>
            <person name="Lichtman M.A."/>
            <person name="Hartl F.-U."/>
            <person name="Sherman F."/>
            <person name="Segel G.B."/>
        </authorList>
    </citation>
    <scope>NUCLEOTIDE SEQUENCE [GENOMIC DNA]</scope>
</reference>
<reference key="2">
    <citation type="journal article" date="1997" name="Nature">
        <title>The nucleotide sequence of Saccharomyces cerevisiae chromosome IV.</title>
        <authorList>
            <person name="Jacq C."/>
            <person name="Alt-Moerbe J."/>
            <person name="Andre B."/>
            <person name="Arnold W."/>
            <person name="Bahr A."/>
            <person name="Ballesta J.P.G."/>
            <person name="Bargues M."/>
            <person name="Baron L."/>
            <person name="Becker A."/>
            <person name="Biteau N."/>
            <person name="Bloecker H."/>
            <person name="Blugeon C."/>
            <person name="Boskovic J."/>
            <person name="Brandt P."/>
            <person name="Brueckner M."/>
            <person name="Buitrago M.J."/>
            <person name="Coster F."/>
            <person name="Delaveau T."/>
            <person name="del Rey F."/>
            <person name="Dujon B."/>
            <person name="Eide L.G."/>
            <person name="Garcia-Cantalejo J.M."/>
            <person name="Goffeau A."/>
            <person name="Gomez-Peris A."/>
            <person name="Granotier C."/>
            <person name="Hanemann V."/>
            <person name="Hankeln T."/>
            <person name="Hoheisel J.D."/>
            <person name="Jaeger W."/>
            <person name="Jimenez A."/>
            <person name="Jonniaux J.-L."/>
            <person name="Kraemer C."/>
            <person name="Kuester H."/>
            <person name="Laamanen P."/>
            <person name="Legros Y."/>
            <person name="Louis E.J."/>
            <person name="Moeller-Rieker S."/>
            <person name="Monnet A."/>
            <person name="Moro M."/>
            <person name="Mueller-Auer S."/>
            <person name="Nussbaumer B."/>
            <person name="Paricio N."/>
            <person name="Paulin L."/>
            <person name="Perea J."/>
            <person name="Perez-Alonso M."/>
            <person name="Perez-Ortin J.E."/>
            <person name="Pohl T.M."/>
            <person name="Prydz H."/>
            <person name="Purnelle B."/>
            <person name="Rasmussen S.W."/>
            <person name="Remacha M.A."/>
            <person name="Revuelta J.L."/>
            <person name="Rieger M."/>
            <person name="Salom D."/>
            <person name="Saluz H.P."/>
            <person name="Saiz J.E."/>
            <person name="Saren A.-M."/>
            <person name="Schaefer M."/>
            <person name="Scharfe M."/>
            <person name="Schmidt E.R."/>
            <person name="Schneider C."/>
            <person name="Scholler P."/>
            <person name="Schwarz S."/>
            <person name="Soler-Mira A."/>
            <person name="Urrestarazu L.A."/>
            <person name="Verhasselt P."/>
            <person name="Vissers S."/>
            <person name="Voet M."/>
            <person name="Volckaert G."/>
            <person name="Wagner G."/>
            <person name="Wambutt R."/>
            <person name="Wedler E."/>
            <person name="Wedler H."/>
            <person name="Woelfl S."/>
            <person name="Harris D.E."/>
            <person name="Bowman S."/>
            <person name="Brown D."/>
            <person name="Churcher C.M."/>
            <person name="Connor R."/>
            <person name="Dedman K."/>
            <person name="Gentles S."/>
            <person name="Hamlin N."/>
            <person name="Hunt S."/>
            <person name="Jones L."/>
            <person name="McDonald S."/>
            <person name="Murphy L.D."/>
            <person name="Niblett D."/>
            <person name="Odell C."/>
            <person name="Oliver K."/>
            <person name="Rajandream M.A."/>
            <person name="Richards C."/>
            <person name="Shore L."/>
            <person name="Walsh S.V."/>
            <person name="Barrell B.G."/>
            <person name="Dietrich F.S."/>
            <person name="Mulligan J.T."/>
            <person name="Allen E."/>
            <person name="Araujo R."/>
            <person name="Aviles E."/>
            <person name="Berno A."/>
            <person name="Carpenter J."/>
            <person name="Chen E."/>
            <person name="Cherry J.M."/>
            <person name="Chung E."/>
            <person name="Duncan M."/>
            <person name="Hunicke-Smith S."/>
            <person name="Hyman R.W."/>
            <person name="Komp C."/>
            <person name="Lashkari D."/>
            <person name="Lew H."/>
            <person name="Lin D."/>
            <person name="Mosedale D."/>
            <person name="Nakahara K."/>
            <person name="Namath A."/>
            <person name="Oefner P."/>
            <person name="Oh C."/>
            <person name="Petel F.X."/>
            <person name="Roberts D."/>
            <person name="Schramm S."/>
            <person name="Schroeder M."/>
            <person name="Shogren T."/>
            <person name="Shroff N."/>
            <person name="Winant A."/>
            <person name="Yelton M.A."/>
            <person name="Botstein D."/>
            <person name="Davis R.W."/>
            <person name="Johnston M."/>
            <person name="Andrews S."/>
            <person name="Brinkman R."/>
            <person name="Cooper J."/>
            <person name="Ding H."/>
            <person name="Du Z."/>
            <person name="Favello A."/>
            <person name="Fulton L."/>
            <person name="Gattung S."/>
            <person name="Greco T."/>
            <person name="Hallsworth K."/>
            <person name="Hawkins J."/>
            <person name="Hillier L.W."/>
            <person name="Jier M."/>
            <person name="Johnson D."/>
            <person name="Johnston L."/>
            <person name="Kirsten J."/>
            <person name="Kucaba T."/>
            <person name="Langston Y."/>
            <person name="Latreille P."/>
            <person name="Le T."/>
            <person name="Mardis E."/>
            <person name="Menezes S."/>
            <person name="Miller N."/>
            <person name="Nhan M."/>
            <person name="Pauley A."/>
            <person name="Peluso D."/>
            <person name="Rifkin L."/>
            <person name="Riles L."/>
            <person name="Taich A."/>
            <person name="Trevaskis E."/>
            <person name="Vignati D."/>
            <person name="Wilcox L."/>
            <person name="Wohldman P."/>
            <person name="Vaudin M."/>
            <person name="Wilson R."/>
            <person name="Waterston R."/>
            <person name="Albermann K."/>
            <person name="Hani J."/>
            <person name="Heumann K."/>
            <person name="Kleine K."/>
            <person name="Mewes H.-W."/>
            <person name="Zollner A."/>
            <person name="Zaccaria P."/>
        </authorList>
    </citation>
    <scope>NUCLEOTIDE SEQUENCE [LARGE SCALE GENOMIC DNA]</scope>
    <source>
        <strain>ATCC 204508 / S288c</strain>
    </source>
</reference>
<reference key="3">
    <citation type="journal article" date="2014" name="G3 (Bethesda)">
        <title>The reference genome sequence of Saccharomyces cerevisiae: Then and now.</title>
        <authorList>
            <person name="Engel S.R."/>
            <person name="Dietrich F.S."/>
            <person name="Fisk D.G."/>
            <person name="Binkley G."/>
            <person name="Balakrishnan R."/>
            <person name="Costanzo M.C."/>
            <person name="Dwight S.S."/>
            <person name="Hitz B.C."/>
            <person name="Karra K."/>
            <person name="Nash R.S."/>
            <person name="Weng S."/>
            <person name="Wong E.D."/>
            <person name="Lloyd P."/>
            <person name="Skrzypek M.S."/>
            <person name="Miyasato S.R."/>
            <person name="Simison M."/>
            <person name="Cherry J.M."/>
        </authorList>
    </citation>
    <scope>GENOME REANNOTATION</scope>
    <source>
        <strain>ATCC 204508 / S288c</strain>
    </source>
</reference>
<reference key="4">
    <citation type="journal article" date="2008" name="Mol. Cell. Proteomics">
        <title>A multidimensional chromatography technology for in-depth phosphoproteome analysis.</title>
        <authorList>
            <person name="Albuquerque C.P."/>
            <person name="Smolka M.B."/>
            <person name="Payne S.H."/>
            <person name="Bafna V."/>
            <person name="Eng J."/>
            <person name="Zhou H."/>
        </authorList>
    </citation>
    <scope>PHOSPHORYLATION [LARGE SCALE ANALYSIS] AT SER-249</scope>
    <scope>IDENTIFICATION BY MASS SPECTROMETRY [LARGE SCALE ANALYSIS]</scope>
</reference>
<reference key="5">
    <citation type="journal article" date="2012" name="Proc. Natl. Acad. Sci. U.S.A.">
        <title>N-terminal acetylome analyses and functional insights of the N-terminal acetyltransferase NatB.</title>
        <authorList>
            <person name="Van Damme P."/>
            <person name="Lasa M."/>
            <person name="Polevoda B."/>
            <person name="Gazquez C."/>
            <person name="Elosegui-Artola A."/>
            <person name="Kim D.S."/>
            <person name="De Juan-Pardo E."/>
            <person name="Demeyer K."/>
            <person name="Hole K."/>
            <person name="Larrea E."/>
            <person name="Timmerman E."/>
            <person name="Prieto J."/>
            <person name="Arnesen T."/>
            <person name="Sherman F."/>
            <person name="Gevaert K."/>
            <person name="Aldabe R."/>
        </authorList>
    </citation>
    <scope>ACETYLATION [LARGE SCALE ANALYSIS] AT SER-2</scope>
    <scope>CLEAVAGE OF INITIATOR METHIONINE [LARGE SCALE ANALYSIS]</scope>
    <scope>IDENTIFICATION BY MASS SPECTROMETRY [LARGE SCALE ANALYSIS]</scope>
</reference>
<accession>P39079</accession>
<accession>D6VSH1</accession>
<protein>
    <recommendedName>
        <fullName>T-complex protein 1 subunit zeta</fullName>
        <shortName>TCP-1-zeta</shortName>
    </recommendedName>
    <alternativeName>
        <fullName>CCT-zeta</fullName>
    </alternativeName>
</protein>
<proteinExistence type="evidence at protein level"/>
<feature type="initiator methionine" description="Removed" evidence="3">
    <location>
        <position position="1"/>
    </location>
</feature>
<feature type="chain" id="PRO_0000128362" description="T-complex protein 1 subunit zeta">
    <location>
        <begin position="2"/>
        <end position="546"/>
    </location>
</feature>
<feature type="modified residue" description="N-acetylserine" evidence="3">
    <location>
        <position position="2"/>
    </location>
</feature>
<feature type="modified residue" description="Phosphoserine" evidence="2">
    <location>
        <position position="249"/>
    </location>
</feature>
<feature type="turn" evidence="4">
    <location>
        <begin position="4"/>
        <end position="6"/>
    </location>
</feature>
<feature type="strand" evidence="5">
    <location>
        <begin position="7"/>
        <end position="9"/>
    </location>
</feature>
<feature type="strand" evidence="4">
    <location>
        <begin position="11"/>
        <end position="14"/>
    </location>
</feature>
<feature type="helix" evidence="4">
    <location>
        <begin position="16"/>
        <end position="33"/>
    </location>
</feature>
<feature type="helix" evidence="4">
    <location>
        <begin position="34"/>
        <end position="36"/>
    </location>
</feature>
<feature type="strand" evidence="4">
    <location>
        <begin position="44"/>
        <end position="47"/>
    </location>
</feature>
<feature type="strand" evidence="4">
    <location>
        <begin position="53"/>
        <end position="56"/>
    </location>
</feature>
<feature type="helix" evidence="4">
    <location>
        <begin position="59"/>
        <end position="65"/>
    </location>
</feature>
<feature type="helix" evidence="4">
    <location>
        <begin position="71"/>
        <end position="86"/>
    </location>
</feature>
<feature type="helix" evidence="4">
    <location>
        <begin position="91"/>
        <end position="109"/>
    </location>
</feature>
<feature type="turn" evidence="4">
    <location>
        <begin position="110"/>
        <end position="112"/>
    </location>
</feature>
<feature type="helix" evidence="4">
    <location>
        <begin position="115"/>
        <end position="136"/>
    </location>
</feature>
<feature type="strand" evidence="5">
    <location>
        <begin position="137"/>
        <end position="139"/>
    </location>
</feature>
<feature type="helix" evidence="5">
    <location>
        <begin position="142"/>
        <end position="144"/>
    </location>
</feature>
<feature type="helix" evidence="4">
    <location>
        <begin position="147"/>
        <end position="158"/>
    </location>
</feature>
<feature type="turn" evidence="4">
    <location>
        <begin position="159"/>
        <end position="161"/>
    </location>
</feature>
<feature type="helix" evidence="4">
    <location>
        <begin position="164"/>
        <end position="176"/>
    </location>
</feature>
<feature type="turn" evidence="4">
    <location>
        <begin position="177"/>
        <end position="180"/>
    </location>
</feature>
<feature type="strand" evidence="4">
    <location>
        <begin position="184"/>
        <end position="186"/>
    </location>
</feature>
<feature type="turn" evidence="5">
    <location>
        <begin position="191"/>
        <end position="193"/>
    </location>
</feature>
<feature type="strand" evidence="4">
    <location>
        <begin position="196"/>
        <end position="199"/>
    </location>
</feature>
<feature type="helix" evidence="4">
    <location>
        <begin position="204"/>
        <end position="206"/>
    </location>
</feature>
<feature type="strand" evidence="4">
    <location>
        <begin position="209"/>
        <end position="212"/>
    </location>
</feature>
<feature type="strand" evidence="4">
    <location>
        <begin position="214"/>
        <end position="216"/>
    </location>
</feature>
<feature type="strand" evidence="5">
    <location>
        <begin position="220"/>
        <end position="224"/>
    </location>
</feature>
<feature type="strand" evidence="4">
    <location>
        <begin position="228"/>
        <end position="236"/>
    </location>
</feature>
<feature type="strand" evidence="4">
    <location>
        <begin position="249"/>
        <end position="255"/>
    </location>
</feature>
<feature type="helix" evidence="4">
    <location>
        <begin position="256"/>
        <end position="258"/>
    </location>
</feature>
<feature type="helix" evidence="4">
    <location>
        <begin position="259"/>
        <end position="284"/>
    </location>
</feature>
<feature type="turn" evidence="5">
    <location>
        <begin position="286"/>
        <end position="290"/>
    </location>
</feature>
<feature type="strand" evidence="4">
    <location>
        <begin position="291"/>
        <end position="299"/>
    </location>
</feature>
<feature type="helix" evidence="4">
    <location>
        <begin position="303"/>
        <end position="305"/>
    </location>
</feature>
<feature type="helix" evidence="4">
    <location>
        <begin position="306"/>
        <end position="311"/>
    </location>
</feature>
<feature type="strand" evidence="4">
    <location>
        <begin position="314"/>
        <end position="317"/>
    </location>
</feature>
<feature type="helix" evidence="4">
    <location>
        <begin position="324"/>
        <end position="331"/>
    </location>
</feature>
<feature type="strand" evidence="4">
    <location>
        <begin position="338"/>
        <end position="342"/>
    </location>
</feature>
<feature type="strand" evidence="5">
    <location>
        <begin position="345"/>
        <end position="347"/>
    </location>
</feature>
<feature type="strand" evidence="4">
    <location>
        <begin position="351"/>
        <end position="359"/>
    </location>
</feature>
<feature type="strand" evidence="4">
    <location>
        <begin position="362"/>
        <end position="368"/>
    </location>
</feature>
<feature type="strand" evidence="4">
    <location>
        <begin position="377"/>
        <end position="381"/>
    </location>
</feature>
<feature type="strand" evidence="5">
    <location>
        <begin position="382"/>
        <end position="384"/>
    </location>
</feature>
<feature type="helix" evidence="4">
    <location>
        <begin position="385"/>
        <end position="407"/>
    </location>
</feature>
<feature type="strand" evidence="4">
    <location>
        <begin position="409"/>
        <end position="413"/>
    </location>
</feature>
<feature type="helix" evidence="4">
    <location>
        <begin position="417"/>
        <end position="425"/>
    </location>
</feature>
<feature type="turn" evidence="5">
    <location>
        <begin position="431"/>
        <end position="433"/>
    </location>
</feature>
<feature type="strand" evidence="4">
    <location>
        <begin position="435"/>
        <end position="439"/>
    </location>
</feature>
<feature type="helix" evidence="4">
    <location>
        <begin position="440"/>
        <end position="450"/>
    </location>
</feature>
<feature type="helix" evidence="4">
    <location>
        <begin position="453"/>
        <end position="462"/>
    </location>
</feature>
<feature type="helix" evidence="4">
    <location>
        <begin position="466"/>
        <end position="482"/>
    </location>
</feature>
<feature type="strand" evidence="4">
    <location>
        <begin position="490"/>
        <end position="492"/>
    </location>
</feature>
<feature type="turn" evidence="4">
    <location>
        <begin position="493"/>
        <end position="496"/>
    </location>
</feature>
<feature type="strand" evidence="4">
    <location>
        <begin position="497"/>
        <end position="499"/>
    </location>
</feature>
<feature type="helix" evidence="4">
    <location>
        <begin position="501"/>
        <end position="504"/>
    </location>
</feature>
<feature type="helix" evidence="4">
    <location>
        <begin position="510"/>
        <end position="528"/>
    </location>
</feature>
<feature type="strand" evidence="4">
    <location>
        <begin position="530"/>
        <end position="535"/>
    </location>
</feature>
<sequence>MSLQLLNPKAESLRRDAALKVNVTSAEGLQSVLETNLGPKGTLKMLVDGAGNIKLTKDGKVLLTEMQIQSPTAVLIARAAAAQDEITGDGTTTVVCLVGELLRQAHRFIQEGVHPRIITDGFEIARKESMKFLDEFKISKTNLSNDREFLLQVARSSLLTKVDADLTEVLTPIVTDAVLSVYDAQADNLDLHMVEIMQMQHLSPKDTTFIKGLVLDHGGRHPDMPTRVKNAYVLILNVSLEYEKTEVNSGFFYSSADQRDKLAASERKFVDAKLKKIIDLKNEVCGMDPDKGFVIINQKGIDPMSLDVFAKHNILALRRAKRRNMERLQLVTGGEAQNSVEDLSPQILGFSGLVYQETIGEEKFTYVTENTDPKSCTILIKGSTHYALAQTKDAVRDGLRAVANVLKDKNIIPGAGAFYIALSRYLRSANMNKLGAKGKTKTGIEAFAEALLVIPKTLVKNSGFDPLDVLAMVEDELDDAQDSDETRYVGVDLNIGDSCDPTIEGIWDSYRVLRNAITGATGIASNLLLCDELLRAGRSTLKETPQ</sequence>
<gene>
    <name type="primary">CCT6</name>
    <name type="synonym">TCP20</name>
    <name type="synonym">TCP6</name>
    <name type="ordered locus">YDR188W</name>
    <name type="ORF">YD9395.21</name>
</gene>
<name>TCPZ_YEAST</name>
<keyword id="KW-0002">3D-structure</keyword>
<keyword id="KW-0007">Acetylation</keyword>
<keyword id="KW-0067">ATP-binding</keyword>
<keyword id="KW-0143">Chaperone</keyword>
<keyword id="KW-0963">Cytoplasm</keyword>
<keyword id="KW-0547">Nucleotide-binding</keyword>
<keyword id="KW-0597">Phosphoprotein</keyword>
<keyword id="KW-1185">Reference proteome</keyword>
<evidence type="ECO:0000305" key="1"/>
<evidence type="ECO:0007744" key="2">
    <source>
    </source>
</evidence>
<evidence type="ECO:0007744" key="3">
    <source>
    </source>
</evidence>
<evidence type="ECO:0007829" key="4">
    <source>
        <dbReference type="PDB" id="6KS6"/>
    </source>
</evidence>
<evidence type="ECO:0007829" key="5">
    <source>
        <dbReference type="PDB" id="7YLY"/>
    </source>
</evidence>
<organism>
    <name type="scientific">Saccharomyces cerevisiae (strain ATCC 204508 / S288c)</name>
    <name type="common">Baker's yeast</name>
    <dbReference type="NCBI Taxonomy" id="559292"/>
    <lineage>
        <taxon>Eukaryota</taxon>
        <taxon>Fungi</taxon>
        <taxon>Dikarya</taxon>
        <taxon>Ascomycota</taxon>
        <taxon>Saccharomycotina</taxon>
        <taxon>Saccharomycetes</taxon>
        <taxon>Saccharomycetales</taxon>
        <taxon>Saccharomycetaceae</taxon>
        <taxon>Saccharomyces</taxon>
    </lineage>
</organism>